<organism>
    <name type="scientific">Pseudomonas putida (strain ATCC 700007 / DSM 6899 / JCM 31910 / BCRC 17059 / LMG 24140 / F1)</name>
    <dbReference type="NCBI Taxonomy" id="351746"/>
    <lineage>
        <taxon>Bacteria</taxon>
        <taxon>Pseudomonadati</taxon>
        <taxon>Pseudomonadota</taxon>
        <taxon>Gammaproteobacteria</taxon>
        <taxon>Pseudomonadales</taxon>
        <taxon>Pseudomonadaceae</taxon>
        <taxon>Pseudomonas</taxon>
    </lineage>
</organism>
<name>ISPG_PSEP1</name>
<gene>
    <name evidence="1" type="primary">ispG</name>
    <name type="ordered locus">Pput_0883</name>
</gene>
<feature type="chain" id="PRO_1000011502" description="4-hydroxy-3-methylbut-2-en-1-yl diphosphate synthase (flavodoxin)">
    <location>
        <begin position="1"/>
        <end position="369"/>
    </location>
</feature>
<feature type="binding site" evidence="1">
    <location>
        <position position="270"/>
    </location>
    <ligand>
        <name>[4Fe-4S] cluster</name>
        <dbReference type="ChEBI" id="CHEBI:49883"/>
    </ligand>
</feature>
<feature type="binding site" evidence="1">
    <location>
        <position position="273"/>
    </location>
    <ligand>
        <name>[4Fe-4S] cluster</name>
        <dbReference type="ChEBI" id="CHEBI:49883"/>
    </ligand>
</feature>
<feature type="binding site" evidence="1">
    <location>
        <position position="305"/>
    </location>
    <ligand>
        <name>[4Fe-4S] cluster</name>
        <dbReference type="ChEBI" id="CHEBI:49883"/>
    </ligand>
</feature>
<feature type="binding site" evidence="1">
    <location>
        <position position="312"/>
    </location>
    <ligand>
        <name>[4Fe-4S] cluster</name>
        <dbReference type="ChEBI" id="CHEBI:49883"/>
    </ligand>
</feature>
<protein>
    <recommendedName>
        <fullName evidence="1">4-hydroxy-3-methylbut-2-en-1-yl diphosphate synthase (flavodoxin)</fullName>
        <ecNumber evidence="1">1.17.7.3</ecNumber>
    </recommendedName>
    <alternativeName>
        <fullName evidence="1">1-hydroxy-2-methyl-2-(E)-butenyl 4-diphosphate synthase</fullName>
    </alternativeName>
</protein>
<dbReference type="EC" id="1.17.7.3" evidence="1"/>
<dbReference type="EMBL" id="CP000712">
    <property type="protein sequence ID" value="ABQ77045.1"/>
    <property type="molecule type" value="Genomic_DNA"/>
</dbReference>
<dbReference type="SMR" id="A5VYT5"/>
<dbReference type="KEGG" id="ppf:Pput_0883"/>
<dbReference type="eggNOG" id="COG0821">
    <property type="taxonomic scope" value="Bacteria"/>
</dbReference>
<dbReference type="HOGENOM" id="CLU_042258_0_0_6"/>
<dbReference type="UniPathway" id="UPA00056">
    <property type="reaction ID" value="UER00096"/>
</dbReference>
<dbReference type="GO" id="GO:0051539">
    <property type="term" value="F:4 iron, 4 sulfur cluster binding"/>
    <property type="evidence" value="ECO:0007669"/>
    <property type="project" value="UniProtKB-UniRule"/>
</dbReference>
<dbReference type="GO" id="GO:0046429">
    <property type="term" value="F:4-hydroxy-3-methylbut-2-en-1-yl diphosphate synthase activity (ferredoxin)"/>
    <property type="evidence" value="ECO:0007669"/>
    <property type="project" value="UniProtKB-UniRule"/>
</dbReference>
<dbReference type="GO" id="GO:0141197">
    <property type="term" value="F:4-hydroxy-3-methylbut-2-enyl-diphosphate synthase activity (flavodoxin)"/>
    <property type="evidence" value="ECO:0007669"/>
    <property type="project" value="UniProtKB-EC"/>
</dbReference>
<dbReference type="GO" id="GO:0005506">
    <property type="term" value="F:iron ion binding"/>
    <property type="evidence" value="ECO:0007669"/>
    <property type="project" value="InterPro"/>
</dbReference>
<dbReference type="GO" id="GO:0019288">
    <property type="term" value="P:isopentenyl diphosphate biosynthetic process, methylerythritol 4-phosphate pathway"/>
    <property type="evidence" value="ECO:0007669"/>
    <property type="project" value="UniProtKB-UniRule"/>
</dbReference>
<dbReference type="GO" id="GO:0016114">
    <property type="term" value="P:terpenoid biosynthetic process"/>
    <property type="evidence" value="ECO:0007669"/>
    <property type="project" value="InterPro"/>
</dbReference>
<dbReference type="FunFam" id="3.20.20.20:FF:000001">
    <property type="entry name" value="4-hydroxy-3-methylbut-2-en-1-yl diphosphate synthase (flavodoxin)"/>
    <property type="match status" value="1"/>
</dbReference>
<dbReference type="Gene3D" id="3.20.20.20">
    <property type="entry name" value="Dihydropteroate synthase-like"/>
    <property type="match status" value="1"/>
</dbReference>
<dbReference type="Gene3D" id="3.30.413.10">
    <property type="entry name" value="Sulfite Reductase Hemoprotein, domain 1"/>
    <property type="match status" value="1"/>
</dbReference>
<dbReference type="HAMAP" id="MF_00159">
    <property type="entry name" value="IspG"/>
    <property type="match status" value="1"/>
</dbReference>
<dbReference type="InterPro" id="IPR011005">
    <property type="entry name" value="Dihydropteroate_synth-like_sf"/>
</dbReference>
<dbReference type="InterPro" id="IPR016425">
    <property type="entry name" value="IspG_bac"/>
</dbReference>
<dbReference type="InterPro" id="IPR004588">
    <property type="entry name" value="IspG_bac-typ"/>
</dbReference>
<dbReference type="InterPro" id="IPR045854">
    <property type="entry name" value="NO2/SO3_Rdtase_4Fe4S_sf"/>
</dbReference>
<dbReference type="NCBIfam" id="TIGR00612">
    <property type="entry name" value="ispG_gcpE"/>
    <property type="match status" value="1"/>
</dbReference>
<dbReference type="NCBIfam" id="NF001540">
    <property type="entry name" value="PRK00366.1"/>
    <property type="match status" value="1"/>
</dbReference>
<dbReference type="PANTHER" id="PTHR30454">
    <property type="entry name" value="4-HYDROXY-3-METHYLBUT-2-EN-1-YL DIPHOSPHATE SYNTHASE"/>
    <property type="match status" value="1"/>
</dbReference>
<dbReference type="PANTHER" id="PTHR30454:SF0">
    <property type="entry name" value="4-HYDROXY-3-METHYLBUT-2-EN-1-YL DIPHOSPHATE SYNTHASE (FERREDOXIN), CHLOROPLASTIC"/>
    <property type="match status" value="1"/>
</dbReference>
<dbReference type="Pfam" id="PF04551">
    <property type="entry name" value="GcpE"/>
    <property type="match status" value="1"/>
</dbReference>
<dbReference type="PIRSF" id="PIRSF004640">
    <property type="entry name" value="IspG"/>
    <property type="match status" value="1"/>
</dbReference>
<dbReference type="SUPFAM" id="SSF51412">
    <property type="entry name" value="Inosine monophosphate dehydrogenase (IMPDH)"/>
    <property type="match status" value="1"/>
</dbReference>
<dbReference type="SUPFAM" id="SSF56014">
    <property type="entry name" value="Nitrite and sulphite reductase 4Fe-4S domain-like"/>
    <property type="match status" value="1"/>
</dbReference>
<evidence type="ECO:0000255" key="1">
    <source>
        <dbReference type="HAMAP-Rule" id="MF_00159"/>
    </source>
</evidence>
<proteinExistence type="inferred from homology"/>
<sequence length="369" mass="39716">MHGESPIKRRESRKIWVGNVPVGGDAPIAVQSMTNTDTNDVAATVAQIQRLVDAGVDIVRVSVPDMDAAEAFGKIKQRVSVPLVADIHFDYKIALRVAELGVDCLRINPGNIGREDRVRAVVDAARDRGIPIRIGVNAGSLEKDLQKKYGEPTPAALVESALRHVEHLDRLDFQDFKVSVKASDVFMAVEAYRLLAKQIVQPLHLGITEAGGLRSGTVKSAVGLGMLLAEGIGDTIRISLAADPVEEVKVGYDILKSLHLRSRGINFIACPSCSRQNFDVVKTMNELEGRLEDLLVPLDVAVIGCVVNGPGEAKEAHVGLTGGTPNLIYIDGKPAQKLTNDNLVDELEKLIRQKAAEKAEADAALIVRG</sequence>
<reference key="1">
    <citation type="submission" date="2007-05" db="EMBL/GenBank/DDBJ databases">
        <title>Complete sequence of Pseudomonas putida F1.</title>
        <authorList>
            <consortium name="US DOE Joint Genome Institute"/>
            <person name="Copeland A."/>
            <person name="Lucas S."/>
            <person name="Lapidus A."/>
            <person name="Barry K."/>
            <person name="Detter J.C."/>
            <person name="Glavina del Rio T."/>
            <person name="Hammon N."/>
            <person name="Israni S."/>
            <person name="Dalin E."/>
            <person name="Tice H."/>
            <person name="Pitluck S."/>
            <person name="Chain P."/>
            <person name="Malfatti S."/>
            <person name="Shin M."/>
            <person name="Vergez L."/>
            <person name="Schmutz J."/>
            <person name="Larimer F."/>
            <person name="Land M."/>
            <person name="Hauser L."/>
            <person name="Kyrpides N."/>
            <person name="Lykidis A."/>
            <person name="Parales R."/>
            <person name="Richardson P."/>
        </authorList>
    </citation>
    <scope>NUCLEOTIDE SEQUENCE [LARGE SCALE GENOMIC DNA]</scope>
    <source>
        <strain>ATCC 700007 / DSM 6899 / JCM 31910 / BCRC 17059 / LMG 24140 / F1</strain>
    </source>
</reference>
<comment type="function">
    <text evidence="1">Converts 2C-methyl-D-erythritol 2,4-cyclodiphosphate (ME-2,4cPP) into 1-hydroxy-2-methyl-2-(E)-butenyl 4-diphosphate.</text>
</comment>
<comment type="catalytic activity">
    <reaction evidence="1">
        <text>(2E)-4-hydroxy-3-methylbut-2-enyl diphosphate + oxidized [flavodoxin] + H2O + 2 H(+) = 2-C-methyl-D-erythritol 2,4-cyclic diphosphate + reduced [flavodoxin]</text>
        <dbReference type="Rhea" id="RHEA:43604"/>
        <dbReference type="Rhea" id="RHEA-COMP:10622"/>
        <dbReference type="Rhea" id="RHEA-COMP:10623"/>
        <dbReference type="ChEBI" id="CHEBI:15377"/>
        <dbReference type="ChEBI" id="CHEBI:15378"/>
        <dbReference type="ChEBI" id="CHEBI:57618"/>
        <dbReference type="ChEBI" id="CHEBI:58210"/>
        <dbReference type="ChEBI" id="CHEBI:58483"/>
        <dbReference type="ChEBI" id="CHEBI:128753"/>
        <dbReference type="EC" id="1.17.7.3"/>
    </reaction>
</comment>
<comment type="cofactor">
    <cofactor evidence="1">
        <name>[4Fe-4S] cluster</name>
        <dbReference type="ChEBI" id="CHEBI:49883"/>
    </cofactor>
    <text evidence="1">Binds 1 [4Fe-4S] cluster.</text>
</comment>
<comment type="pathway">
    <text evidence="1">Isoprenoid biosynthesis; isopentenyl diphosphate biosynthesis via DXP pathway; isopentenyl diphosphate from 1-deoxy-D-xylulose 5-phosphate: step 5/6.</text>
</comment>
<comment type="similarity">
    <text evidence="1">Belongs to the IspG family.</text>
</comment>
<keyword id="KW-0004">4Fe-4S</keyword>
<keyword id="KW-0408">Iron</keyword>
<keyword id="KW-0411">Iron-sulfur</keyword>
<keyword id="KW-0414">Isoprene biosynthesis</keyword>
<keyword id="KW-0479">Metal-binding</keyword>
<keyword id="KW-0560">Oxidoreductase</keyword>
<accession>A5VYT5</accession>